<dbReference type="EC" id="2.4.1.227" evidence="1"/>
<dbReference type="EMBL" id="AM999887">
    <property type="protein sequence ID" value="CAQ55006.1"/>
    <property type="molecule type" value="Genomic_DNA"/>
</dbReference>
<dbReference type="RefSeq" id="WP_007302295.1">
    <property type="nucleotide sequence ID" value="NC_010981.1"/>
</dbReference>
<dbReference type="SMR" id="B3CM87"/>
<dbReference type="CAZy" id="GT28">
    <property type="family name" value="Glycosyltransferase Family 28"/>
</dbReference>
<dbReference type="KEGG" id="wpi:WP0898"/>
<dbReference type="eggNOG" id="COG0707">
    <property type="taxonomic scope" value="Bacteria"/>
</dbReference>
<dbReference type="HOGENOM" id="CLU_037404_2_1_5"/>
<dbReference type="UniPathway" id="UPA00219"/>
<dbReference type="Proteomes" id="UP000008814">
    <property type="component" value="Chromosome"/>
</dbReference>
<dbReference type="GO" id="GO:0005886">
    <property type="term" value="C:plasma membrane"/>
    <property type="evidence" value="ECO:0007669"/>
    <property type="project" value="UniProtKB-SubCell"/>
</dbReference>
<dbReference type="GO" id="GO:0051991">
    <property type="term" value="F:UDP-N-acetyl-D-glucosamine:N-acetylmuramoyl-L-alanyl-D-glutamyl-meso-2,6-diaminopimelyl-D-alanyl-D-alanine-diphosphoundecaprenol 4-beta-N-acetylglucosaminlytransferase activity"/>
    <property type="evidence" value="ECO:0007669"/>
    <property type="project" value="RHEA"/>
</dbReference>
<dbReference type="GO" id="GO:0050511">
    <property type="term" value="F:undecaprenyldiphospho-muramoylpentapeptide beta-N-acetylglucosaminyltransferase activity"/>
    <property type="evidence" value="ECO:0007669"/>
    <property type="project" value="UniProtKB-UniRule"/>
</dbReference>
<dbReference type="GO" id="GO:0005975">
    <property type="term" value="P:carbohydrate metabolic process"/>
    <property type="evidence" value="ECO:0007669"/>
    <property type="project" value="InterPro"/>
</dbReference>
<dbReference type="GO" id="GO:0051301">
    <property type="term" value="P:cell division"/>
    <property type="evidence" value="ECO:0007669"/>
    <property type="project" value="UniProtKB-KW"/>
</dbReference>
<dbReference type="GO" id="GO:0071555">
    <property type="term" value="P:cell wall organization"/>
    <property type="evidence" value="ECO:0007669"/>
    <property type="project" value="UniProtKB-KW"/>
</dbReference>
<dbReference type="GO" id="GO:0030259">
    <property type="term" value="P:lipid glycosylation"/>
    <property type="evidence" value="ECO:0007669"/>
    <property type="project" value="UniProtKB-UniRule"/>
</dbReference>
<dbReference type="GO" id="GO:0009252">
    <property type="term" value="P:peptidoglycan biosynthetic process"/>
    <property type="evidence" value="ECO:0007669"/>
    <property type="project" value="UniProtKB-UniRule"/>
</dbReference>
<dbReference type="GO" id="GO:0008360">
    <property type="term" value="P:regulation of cell shape"/>
    <property type="evidence" value="ECO:0007669"/>
    <property type="project" value="UniProtKB-KW"/>
</dbReference>
<dbReference type="CDD" id="cd03785">
    <property type="entry name" value="GT28_MurG"/>
    <property type="match status" value="1"/>
</dbReference>
<dbReference type="Gene3D" id="3.40.50.2000">
    <property type="entry name" value="Glycogen Phosphorylase B"/>
    <property type="match status" value="2"/>
</dbReference>
<dbReference type="HAMAP" id="MF_00033">
    <property type="entry name" value="MurG"/>
    <property type="match status" value="1"/>
</dbReference>
<dbReference type="InterPro" id="IPR006009">
    <property type="entry name" value="GlcNAc_MurG"/>
</dbReference>
<dbReference type="InterPro" id="IPR007235">
    <property type="entry name" value="Glyco_trans_28_C"/>
</dbReference>
<dbReference type="InterPro" id="IPR004276">
    <property type="entry name" value="GlycoTrans_28_N"/>
</dbReference>
<dbReference type="PANTHER" id="PTHR21015:SF22">
    <property type="entry name" value="GLYCOSYLTRANSFERASE"/>
    <property type="match status" value="1"/>
</dbReference>
<dbReference type="PANTHER" id="PTHR21015">
    <property type="entry name" value="UDP-N-ACETYLGLUCOSAMINE--N-ACETYLMURAMYL-(PENTAPEPTIDE) PYROPHOSPHORYL-UNDECAPRENOL N-ACETYLGLUCOSAMINE TRANSFERASE 1"/>
    <property type="match status" value="1"/>
</dbReference>
<dbReference type="Pfam" id="PF04101">
    <property type="entry name" value="Glyco_tran_28_C"/>
    <property type="match status" value="1"/>
</dbReference>
<dbReference type="Pfam" id="PF03033">
    <property type="entry name" value="Glyco_transf_28"/>
    <property type="match status" value="1"/>
</dbReference>
<dbReference type="SUPFAM" id="SSF53756">
    <property type="entry name" value="UDP-Glycosyltransferase/glycogen phosphorylase"/>
    <property type="match status" value="1"/>
</dbReference>
<name>MURG_WOLPP</name>
<sequence>MTIILATGGTGGHVFPAITLAKALKVQGHNCILFTDQKTINIESYILPLCKPSGNKLKFLFLLMYSCVLALYQTRKLKPKLIIGFGSYASFPTLLAAKILSIPIVLHEQNTVLGRVNRFFFKSAKLIATSFPETKYAEGSKCVFTGNFVDIEAQGYSRAETVLNVLIIAGSQGANFFDDVVSSVICDLPVEVKERIRVTQQCTKKNINKVKSLYKSEGIDCELSEFFDDMENKLANAHLVISRAGATSIAEITLAERPAVYIPYPHSKDNHQFYNAKHIEDSGAAVMVEQNSNAKKNLGELLVDLLQNCQKLRDMANNTKKTRIRNGVTEFIKAIAQELS</sequence>
<feature type="chain" id="PRO_1000090487" description="UDP-N-acetylglucosamine--N-acetylmuramyl-(pentapeptide) pyrophosphoryl-undecaprenol N-acetylglucosamine transferase">
    <location>
        <begin position="1"/>
        <end position="340"/>
    </location>
</feature>
<feature type="binding site" evidence="1">
    <location>
        <begin position="10"/>
        <end position="12"/>
    </location>
    <ligand>
        <name>UDP-N-acetyl-alpha-D-glucosamine</name>
        <dbReference type="ChEBI" id="CHEBI:57705"/>
    </ligand>
</feature>
<feature type="binding site" evidence="1">
    <location>
        <position position="110"/>
    </location>
    <ligand>
        <name>UDP-N-acetyl-alpha-D-glucosamine</name>
        <dbReference type="ChEBI" id="CHEBI:57705"/>
    </ligand>
</feature>
<feature type="binding site" evidence="1">
    <location>
        <position position="171"/>
    </location>
    <ligand>
        <name>UDP-N-acetyl-alpha-D-glucosamine</name>
        <dbReference type="ChEBI" id="CHEBI:57705"/>
    </ligand>
</feature>
<feature type="binding site" evidence="1">
    <location>
        <position position="272"/>
    </location>
    <ligand>
        <name>UDP-N-acetyl-alpha-D-glucosamine</name>
        <dbReference type="ChEBI" id="CHEBI:57705"/>
    </ligand>
</feature>
<reference key="1">
    <citation type="journal article" date="2008" name="Mol. Biol. Evol.">
        <title>Genome evolution of Wolbachia strain wPip from the Culex pipiens group.</title>
        <authorList>
            <person name="Klasson L."/>
            <person name="Walker T."/>
            <person name="Sebaihia M."/>
            <person name="Sanders M.J."/>
            <person name="Quail M.A."/>
            <person name="Lord A."/>
            <person name="Sanders S."/>
            <person name="Earl J."/>
            <person name="O'Neill S.L."/>
            <person name="Thomson N."/>
            <person name="Sinkins S.P."/>
            <person name="Parkhill J."/>
        </authorList>
    </citation>
    <scope>NUCLEOTIDE SEQUENCE [LARGE SCALE GENOMIC DNA]</scope>
    <source>
        <strain>wPip</strain>
    </source>
</reference>
<keyword id="KW-0131">Cell cycle</keyword>
<keyword id="KW-0132">Cell division</keyword>
<keyword id="KW-1003">Cell membrane</keyword>
<keyword id="KW-0133">Cell shape</keyword>
<keyword id="KW-0961">Cell wall biogenesis/degradation</keyword>
<keyword id="KW-0328">Glycosyltransferase</keyword>
<keyword id="KW-0472">Membrane</keyword>
<keyword id="KW-0573">Peptidoglycan synthesis</keyword>
<keyword id="KW-0808">Transferase</keyword>
<protein>
    <recommendedName>
        <fullName evidence="1">UDP-N-acetylglucosamine--N-acetylmuramyl-(pentapeptide) pyrophosphoryl-undecaprenol N-acetylglucosamine transferase</fullName>
        <ecNumber evidence="1">2.4.1.227</ecNumber>
    </recommendedName>
    <alternativeName>
        <fullName evidence="1">Undecaprenyl-PP-MurNAc-pentapeptide-UDPGlcNAc GlcNAc transferase</fullName>
    </alternativeName>
</protein>
<organism>
    <name type="scientific">Wolbachia pipientis subsp. Culex pipiens (strain wPip)</name>
    <dbReference type="NCBI Taxonomy" id="570417"/>
    <lineage>
        <taxon>Bacteria</taxon>
        <taxon>Pseudomonadati</taxon>
        <taxon>Pseudomonadota</taxon>
        <taxon>Alphaproteobacteria</taxon>
        <taxon>Rickettsiales</taxon>
        <taxon>Anaplasmataceae</taxon>
        <taxon>Wolbachieae</taxon>
        <taxon>Wolbachia</taxon>
    </lineage>
</organism>
<proteinExistence type="inferred from homology"/>
<comment type="function">
    <text evidence="1">Cell wall formation. Catalyzes the transfer of a GlcNAc subunit on undecaprenyl-pyrophosphoryl-MurNAc-pentapeptide (lipid intermediate I) to form undecaprenyl-pyrophosphoryl-MurNAc-(pentapeptide)GlcNAc (lipid intermediate II).</text>
</comment>
<comment type="catalytic activity">
    <reaction evidence="1">
        <text>di-trans,octa-cis-undecaprenyl diphospho-N-acetyl-alpha-D-muramoyl-L-alanyl-D-glutamyl-meso-2,6-diaminopimeloyl-D-alanyl-D-alanine + UDP-N-acetyl-alpha-D-glucosamine = di-trans,octa-cis-undecaprenyl diphospho-[N-acetyl-alpha-D-glucosaminyl-(1-&gt;4)]-N-acetyl-alpha-D-muramoyl-L-alanyl-D-glutamyl-meso-2,6-diaminopimeloyl-D-alanyl-D-alanine + UDP + H(+)</text>
        <dbReference type="Rhea" id="RHEA:31227"/>
        <dbReference type="ChEBI" id="CHEBI:15378"/>
        <dbReference type="ChEBI" id="CHEBI:57705"/>
        <dbReference type="ChEBI" id="CHEBI:58223"/>
        <dbReference type="ChEBI" id="CHEBI:61387"/>
        <dbReference type="ChEBI" id="CHEBI:61388"/>
        <dbReference type="EC" id="2.4.1.227"/>
    </reaction>
</comment>
<comment type="pathway">
    <text evidence="1">Cell wall biogenesis; peptidoglycan biosynthesis.</text>
</comment>
<comment type="subcellular location">
    <subcellularLocation>
        <location evidence="1">Cell membrane</location>
        <topology evidence="1">Peripheral membrane protein</topology>
        <orientation evidence="1">Cytoplasmic side</orientation>
    </subcellularLocation>
</comment>
<comment type="similarity">
    <text evidence="1">Belongs to the glycosyltransferase 28 family. MurG subfamily.</text>
</comment>
<accession>B3CM87</accession>
<gene>
    <name evidence="1" type="primary">murG</name>
    <name type="ordered locus">WP0898</name>
</gene>
<evidence type="ECO:0000255" key="1">
    <source>
        <dbReference type="HAMAP-Rule" id="MF_00033"/>
    </source>
</evidence>